<protein>
    <recommendedName>
        <fullName evidence="1">NADH-quinone oxidoreductase subunit N</fullName>
        <ecNumber evidence="1">7.1.1.-</ecNumber>
    </recommendedName>
    <alternativeName>
        <fullName evidence="1">NADH dehydrogenase I subunit N</fullName>
    </alternativeName>
    <alternativeName>
        <fullName evidence="1">NDH-1 subunit N</fullName>
    </alternativeName>
</protein>
<feature type="chain" id="PRO_1000017378" description="NADH-quinone oxidoreductase subunit N">
    <location>
        <begin position="1"/>
        <end position="485"/>
    </location>
</feature>
<feature type="transmembrane region" description="Helical" evidence="1">
    <location>
        <begin position="8"/>
        <end position="28"/>
    </location>
</feature>
<feature type="transmembrane region" description="Helical" evidence="1">
    <location>
        <begin position="35"/>
        <end position="55"/>
    </location>
</feature>
<feature type="transmembrane region" description="Helical" evidence="1">
    <location>
        <begin position="75"/>
        <end position="95"/>
    </location>
</feature>
<feature type="transmembrane region" description="Helical" evidence="1">
    <location>
        <begin position="105"/>
        <end position="125"/>
    </location>
</feature>
<feature type="transmembrane region" description="Helical" evidence="1">
    <location>
        <begin position="127"/>
        <end position="147"/>
    </location>
</feature>
<feature type="transmembrane region" description="Helical" evidence="1">
    <location>
        <begin position="159"/>
        <end position="179"/>
    </location>
</feature>
<feature type="transmembrane region" description="Helical" evidence="1">
    <location>
        <begin position="203"/>
        <end position="223"/>
    </location>
</feature>
<feature type="transmembrane region" description="Helical" evidence="1">
    <location>
        <begin position="235"/>
        <end position="255"/>
    </location>
</feature>
<feature type="transmembrane region" description="Helical" evidence="1">
    <location>
        <begin position="271"/>
        <end position="291"/>
    </location>
</feature>
<feature type="transmembrane region" description="Helical" evidence="1">
    <location>
        <begin position="297"/>
        <end position="317"/>
    </location>
</feature>
<feature type="transmembrane region" description="Helical" evidence="1">
    <location>
        <begin position="326"/>
        <end position="346"/>
    </location>
</feature>
<feature type="transmembrane region" description="Helical" evidence="1">
    <location>
        <begin position="374"/>
        <end position="394"/>
    </location>
</feature>
<feature type="transmembrane region" description="Helical" evidence="1">
    <location>
        <begin position="408"/>
        <end position="427"/>
    </location>
</feature>
<feature type="transmembrane region" description="Helical" evidence="1">
    <location>
        <begin position="455"/>
        <end position="475"/>
    </location>
</feature>
<dbReference type="EC" id="7.1.1.-" evidence="1"/>
<dbReference type="EMBL" id="CP000783">
    <property type="protein sequence ID" value="ABU76214.1"/>
    <property type="molecule type" value="Genomic_DNA"/>
</dbReference>
<dbReference type="RefSeq" id="WP_012124162.1">
    <property type="nucleotide sequence ID" value="NC_009778.1"/>
</dbReference>
<dbReference type="SMR" id="A7MHT8"/>
<dbReference type="KEGG" id="esa:ESA_00944"/>
<dbReference type="PATRIC" id="fig|290339.8.peg.842"/>
<dbReference type="HOGENOM" id="CLU_007100_1_5_6"/>
<dbReference type="Proteomes" id="UP000000260">
    <property type="component" value="Chromosome"/>
</dbReference>
<dbReference type="GO" id="GO:0005886">
    <property type="term" value="C:plasma membrane"/>
    <property type="evidence" value="ECO:0007669"/>
    <property type="project" value="UniProtKB-SubCell"/>
</dbReference>
<dbReference type="GO" id="GO:0008137">
    <property type="term" value="F:NADH dehydrogenase (ubiquinone) activity"/>
    <property type="evidence" value="ECO:0007669"/>
    <property type="project" value="InterPro"/>
</dbReference>
<dbReference type="GO" id="GO:0050136">
    <property type="term" value="F:NADH:ubiquinone reductase (non-electrogenic) activity"/>
    <property type="evidence" value="ECO:0007669"/>
    <property type="project" value="UniProtKB-UniRule"/>
</dbReference>
<dbReference type="GO" id="GO:0048038">
    <property type="term" value="F:quinone binding"/>
    <property type="evidence" value="ECO:0007669"/>
    <property type="project" value="UniProtKB-KW"/>
</dbReference>
<dbReference type="GO" id="GO:0042773">
    <property type="term" value="P:ATP synthesis coupled electron transport"/>
    <property type="evidence" value="ECO:0007669"/>
    <property type="project" value="InterPro"/>
</dbReference>
<dbReference type="HAMAP" id="MF_00445">
    <property type="entry name" value="NDH1_NuoN_1"/>
    <property type="match status" value="1"/>
</dbReference>
<dbReference type="InterPro" id="IPR010096">
    <property type="entry name" value="NADH-Q_OxRdtase_suN/2"/>
</dbReference>
<dbReference type="InterPro" id="IPR001750">
    <property type="entry name" value="ND/Mrp_TM"/>
</dbReference>
<dbReference type="NCBIfam" id="TIGR01770">
    <property type="entry name" value="NDH_I_N"/>
    <property type="match status" value="1"/>
</dbReference>
<dbReference type="NCBIfam" id="NF004439">
    <property type="entry name" value="PRK05777.1-1"/>
    <property type="match status" value="1"/>
</dbReference>
<dbReference type="PANTHER" id="PTHR22773">
    <property type="entry name" value="NADH DEHYDROGENASE"/>
    <property type="match status" value="1"/>
</dbReference>
<dbReference type="Pfam" id="PF00361">
    <property type="entry name" value="Proton_antipo_M"/>
    <property type="match status" value="1"/>
</dbReference>
<comment type="function">
    <text evidence="1">NDH-1 shuttles electrons from NADH, via FMN and iron-sulfur (Fe-S) centers, to quinones in the respiratory chain. The immediate electron acceptor for the enzyme in this species is believed to be ubiquinone. Couples the redox reaction to proton translocation (for every two electrons transferred, four hydrogen ions are translocated across the cytoplasmic membrane), and thus conserves the redox energy in a proton gradient.</text>
</comment>
<comment type="catalytic activity">
    <reaction evidence="1">
        <text>a quinone + NADH + 5 H(+)(in) = a quinol + NAD(+) + 4 H(+)(out)</text>
        <dbReference type="Rhea" id="RHEA:57888"/>
        <dbReference type="ChEBI" id="CHEBI:15378"/>
        <dbReference type="ChEBI" id="CHEBI:24646"/>
        <dbReference type="ChEBI" id="CHEBI:57540"/>
        <dbReference type="ChEBI" id="CHEBI:57945"/>
        <dbReference type="ChEBI" id="CHEBI:132124"/>
    </reaction>
</comment>
<comment type="subunit">
    <text evidence="1">NDH-1 is composed of 13 different subunits. Subunits NuoA, H, J, K, L, M, N constitute the membrane sector of the complex.</text>
</comment>
<comment type="subcellular location">
    <subcellularLocation>
        <location evidence="1">Cell inner membrane</location>
        <topology evidence="1">Multi-pass membrane protein</topology>
    </subcellularLocation>
</comment>
<comment type="similarity">
    <text evidence="1">Belongs to the complex I subunit 2 family.</text>
</comment>
<name>NUON_CROS8</name>
<gene>
    <name evidence="1" type="primary">nuoN</name>
    <name type="ordered locus">ESA_00944</name>
</gene>
<sequence>MTITTQQLIALLPLLIVGLTVVVVMLSIAWRRNHFLNATLSVVGLNAALLSLWFVGQAGAMDVTPLMRVDGYAMLYTGLVLLASLATCTFAYPWLQGYNDNKEEFYLLVLIAALGGILLANANHLASLFLGIELISLPLFGLVGYAFRQKRSLEAAIKYTILSAAASSFLLFGMALVYAQSGSLSFVTLGKSLADNMLSEPLLLAGLGLMIVGLGFKLSLVPFHLWTPDVYQGAPAPVSTFLATASKIAIFGVVMRLFLYAPVGDSEAVRVVLGVLAFASILFGNLMALTQTNIKRLLGYSSISHLGYLLVALIALKSGDMSMETVGVYLAGYLFSSLGAFGVVSLMSSPYRGPDADSLYSYRGLFWHRPILSAVMTVMMLSLAGIPMTLGFIGKFYVLAVGVQSNLWWLTGAVVVGSAIGLYYYLRVAVSLYLNAPQQLNRDAPSNWAYSAGGVVVLISALLVLVLGVWPQPLITLVQLAKPLM</sequence>
<evidence type="ECO:0000255" key="1">
    <source>
        <dbReference type="HAMAP-Rule" id="MF_00445"/>
    </source>
</evidence>
<reference key="1">
    <citation type="journal article" date="2010" name="PLoS ONE">
        <title>Genome sequence of Cronobacter sakazakii BAA-894 and comparative genomic hybridization analysis with other Cronobacter species.</title>
        <authorList>
            <person name="Kucerova E."/>
            <person name="Clifton S.W."/>
            <person name="Xia X.Q."/>
            <person name="Long F."/>
            <person name="Porwollik S."/>
            <person name="Fulton L."/>
            <person name="Fronick C."/>
            <person name="Minx P."/>
            <person name="Kyung K."/>
            <person name="Warren W."/>
            <person name="Fulton R."/>
            <person name="Feng D."/>
            <person name="Wollam A."/>
            <person name="Shah N."/>
            <person name="Bhonagiri V."/>
            <person name="Nash W.E."/>
            <person name="Hallsworth-Pepin K."/>
            <person name="Wilson R.K."/>
            <person name="McClelland M."/>
            <person name="Forsythe S.J."/>
        </authorList>
    </citation>
    <scope>NUCLEOTIDE SEQUENCE [LARGE SCALE GENOMIC DNA]</scope>
    <source>
        <strain>ATCC BAA-894</strain>
    </source>
</reference>
<accession>A7MHT8</accession>
<proteinExistence type="inferred from homology"/>
<organism>
    <name type="scientific">Cronobacter sakazakii (strain ATCC BAA-894)</name>
    <name type="common">Enterobacter sakazakii</name>
    <dbReference type="NCBI Taxonomy" id="290339"/>
    <lineage>
        <taxon>Bacteria</taxon>
        <taxon>Pseudomonadati</taxon>
        <taxon>Pseudomonadota</taxon>
        <taxon>Gammaproteobacteria</taxon>
        <taxon>Enterobacterales</taxon>
        <taxon>Enterobacteriaceae</taxon>
        <taxon>Cronobacter</taxon>
    </lineage>
</organism>
<keyword id="KW-0997">Cell inner membrane</keyword>
<keyword id="KW-1003">Cell membrane</keyword>
<keyword id="KW-0472">Membrane</keyword>
<keyword id="KW-0520">NAD</keyword>
<keyword id="KW-0874">Quinone</keyword>
<keyword id="KW-1185">Reference proteome</keyword>
<keyword id="KW-1278">Translocase</keyword>
<keyword id="KW-0812">Transmembrane</keyword>
<keyword id="KW-1133">Transmembrane helix</keyword>
<keyword id="KW-0813">Transport</keyword>
<keyword id="KW-0830">Ubiquinone</keyword>